<dbReference type="EC" id="4.2.1.33" evidence="1"/>
<dbReference type="EMBL" id="CP001029">
    <property type="protein sequence ID" value="ACB78550.1"/>
    <property type="molecule type" value="Genomic_DNA"/>
</dbReference>
<dbReference type="RefSeq" id="WP_012452309.1">
    <property type="nucleotide sequence ID" value="NC_010725.1"/>
</dbReference>
<dbReference type="SMR" id="B1ZI64"/>
<dbReference type="STRING" id="441620.Mpop_0372"/>
<dbReference type="KEGG" id="mpo:Mpop_0372"/>
<dbReference type="eggNOG" id="COG0066">
    <property type="taxonomic scope" value="Bacteria"/>
</dbReference>
<dbReference type="HOGENOM" id="CLU_081378_0_3_5"/>
<dbReference type="OrthoDB" id="9777465at2"/>
<dbReference type="UniPathway" id="UPA00048">
    <property type="reaction ID" value="UER00071"/>
</dbReference>
<dbReference type="Proteomes" id="UP000007136">
    <property type="component" value="Chromosome"/>
</dbReference>
<dbReference type="GO" id="GO:0009316">
    <property type="term" value="C:3-isopropylmalate dehydratase complex"/>
    <property type="evidence" value="ECO:0007669"/>
    <property type="project" value="InterPro"/>
</dbReference>
<dbReference type="GO" id="GO:0003861">
    <property type="term" value="F:3-isopropylmalate dehydratase activity"/>
    <property type="evidence" value="ECO:0007669"/>
    <property type="project" value="UniProtKB-UniRule"/>
</dbReference>
<dbReference type="GO" id="GO:0009098">
    <property type="term" value="P:L-leucine biosynthetic process"/>
    <property type="evidence" value="ECO:0007669"/>
    <property type="project" value="UniProtKB-UniRule"/>
</dbReference>
<dbReference type="CDD" id="cd01577">
    <property type="entry name" value="IPMI_Swivel"/>
    <property type="match status" value="1"/>
</dbReference>
<dbReference type="FunFam" id="3.20.19.10:FF:000003">
    <property type="entry name" value="3-isopropylmalate dehydratase small subunit"/>
    <property type="match status" value="1"/>
</dbReference>
<dbReference type="Gene3D" id="3.20.19.10">
    <property type="entry name" value="Aconitase, domain 4"/>
    <property type="match status" value="1"/>
</dbReference>
<dbReference type="HAMAP" id="MF_01031">
    <property type="entry name" value="LeuD_type1"/>
    <property type="match status" value="1"/>
</dbReference>
<dbReference type="InterPro" id="IPR004431">
    <property type="entry name" value="3-IsopropMal_deHydase_ssu"/>
</dbReference>
<dbReference type="InterPro" id="IPR015928">
    <property type="entry name" value="Aconitase/3IPM_dehydase_swvl"/>
</dbReference>
<dbReference type="InterPro" id="IPR000573">
    <property type="entry name" value="AconitaseA/IPMdHydase_ssu_swvl"/>
</dbReference>
<dbReference type="InterPro" id="IPR033940">
    <property type="entry name" value="IPMI_Swivel"/>
</dbReference>
<dbReference type="InterPro" id="IPR050075">
    <property type="entry name" value="LeuD"/>
</dbReference>
<dbReference type="NCBIfam" id="TIGR00171">
    <property type="entry name" value="leuD"/>
    <property type="match status" value="1"/>
</dbReference>
<dbReference type="NCBIfam" id="NF002458">
    <property type="entry name" value="PRK01641.1"/>
    <property type="match status" value="1"/>
</dbReference>
<dbReference type="PANTHER" id="PTHR43345:SF5">
    <property type="entry name" value="3-ISOPROPYLMALATE DEHYDRATASE SMALL SUBUNIT"/>
    <property type="match status" value="1"/>
</dbReference>
<dbReference type="PANTHER" id="PTHR43345">
    <property type="entry name" value="3-ISOPROPYLMALATE DEHYDRATASE SMALL SUBUNIT 2-RELATED-RELATED"/>
    <property type="match status" value="1"/>
</dbReference>
<dbReference type="Pfam" id="PF00694">
    <property type="entry name" value="Aconitase_C"/>
    <property type="match status" value="1"/>
</dbReference>
<dbReference type="SUPFAM" id="SSF52016">
    <property type="entry name" value="LeuD/IlvD-like"/>
    <property type="match status" value="1"/>
</dbReference>
<sequence length="201" mass="22127">MEKFTTLEGVAAPMRIINIDTDRIIPKQYLKTIKRTGLGQGLFSEMRYNDDGSENPDFVLNQPAYRNAKILVVGDNFGCGSSREHAPWALADFGIRCVISTSFADIFFNNCAKNGILAIVVPPEDLEKLFEDAERGANATLTIDLAAQTIKGPDGGTLHFDIDEGRKHNLLNGLDEIGLTLDQKAPAIEAYEAKLAQREWA</sequence>
<evidence type="ECO:0000255" key="1">
    <source>
        <dbReference type="HAMAP-Rule" id="MF_01031"/>
    </source>
</evidence>
<reference key="1">
    <citation type="submission" date="2008-04" db="EMBL/GenBank/DDBJ databases">
        <title>Complete sequence of chromosome of Methylobacterium populi BJ001.</title>
        <authorList>
            <consortium name="US DOE Joint Genome Institute"/>
            <person name="Copeland A."/>
            <person name="Lucas S."/>
            <person name="Lapidus A."/>
            <person name="Glavina del Rio T."/>
            <person name="Dalin E."/>
            <person name="Tice H."/>
            <person name="Bruce D."/>
            <person name="Goodwin L."/>
            <person name="Pitluck S."/>
            <person name="Chertkov O."/>
            <person name="Brettin T."/>
            <person name="Detter J.C."/>
            <person name="Han C."/>
            <person name="Kuske C.R."/>
            <person name="Schmutz J."/>
            <person name="Larimer F."/>
            <person name="Land M."/>
            <person name="Hauser L."/>
            <person name="Kyrpides N."/>
            <person name="Mikhailova N."/>
            <person name="Marx C."/>
            <person name="Richardson P."/>
        </authorList>
    </citation>
    <scope>NUCLEOTIDE SEQUENCE [LARGE SCALE GENOMIC DNA]</scope>
    <source>
        <strain>ATCC BAA-705 / NCIMB 13946 / BJ001</strain>
    </source>
</reference>
<gene>
    <name evidence="1" type="primary">leuD</name>
    <name type="ordered locus">Mpop_0372</name>
</gene>
<feature type="chain" id="PRO_1000135817" description="3-isopropylmalate dehydratase small subunit">
    <location>
        <begin position="1"/>
        <end position="201"/>
    </location>
</feature>
<keyword id="KW-0028">Amino-acid biosynthesis</keyword>
<keyword id="KW-0100">Branched-chain amino acid biosynthesis</keyword>
<keyword id="KW-0432">Leucine biosynthesis</keyword>
<keyword id="KW-0456">Lyase</keyword>
<organism>
    <name type="scientific">Methylorubrum populi (strain ATCC BAA-705 / NCIMB 13946 / BJ001)</name>
    <name type="common">Methylobacterium populi</name>
    <dbReference type="NCBI Taxonomy" id="441620"/>
    <lineage>
        <taxon>Bacteria</taxon>
        <taxon>Pseudomonadati</taxon>
        <taxon>Pseudomonadota</taxon>
        <taxon>Alphaproteobacteria</taxon>
        <taxon>Hyphomicrobiales</taxon>
        <taxon>Methylobacteriaceae</taxon>
        <taxon>Methylorubrum</taxon>
    </lineage>
</organism>
<name>LEUD_METPB</name>
<proteinExistence type="inferred from homology"/>
<protein>
    <recommendedName>
        <fullName evidence="1">3-isopropylmalate dehydratase small subunit</fullName>
        <ecNumber evidence="1">4.2.1.33</ecNumber>
    </recommendedName>
    <alternativeName>
        <fullName evidence="1">Alpha-IPM isomerase</fullName>
        <shortName evidence="1">IPMI</shortName>
    </alternativeName>
    <alternativeName>
        <fullName evidence="1">Isopropylmalate isomerase</fullName>
    </alternativeName>
</protein>
<comment type="function">
    <text evidence="1">Catalyzes the isomerization between 2-isopropylmalate and 3-isopropylmalate, via the formation of 2-isopropylmaleate.</text>
</comment>
<comment type="catalytic activity">
    <reaction evidence="1">
        <text>(2R,3S)-3-isopropylmalate = (2S)-2-isopropylmalate</text>
        <dbReference type="Rhea" id="RHEA:32287"/>
        <dbReference type="ChEBI" id="CHEBI:1178"/>
        <dbReference type="ChEBI" id="CHEBI:35121"/>
        <dbReference type="EC" id="4.2.1.33"/>
    </reaction>
</comment>
<comment type="pathway">
    <text evidence="1">Amino-acid biosynthesis; L-leucine biosynthesis; L-leucine from 3-methyl-2-oxobutanoate: step 2/4.</text>
</comment>
<comment type="subunit">
    <text evidence="1">Heterodimer of LeuC and LeuD.</text>
</comment>
<comment type="similarity">
    <text evidence="1">Belongs to the LeuD family. LeuD type 1 subfamily.</text>
</comment>
<accession>B1ZI64</accession>